<comment type="function">
    <text evidence="1">Catalyzes the hydrolysis of N(2)-succinylarginine into N(2)-succinylornithine, ammonia and CO(2).</text>
</comment>
<comment type="catalytic activity">
    <reaction evidence="1">
        <text>N(2)-succinyl-L-arginine + 2 H2O + 2 H(+) = N(2)-succinyl-L-ornithine + 2 NH4(+) + CO2</text>
        <dbReference type="Rhea" id="RHEA:19533"/>
        <dbReference type="ChEBI" id="CHEBI:15377"/>
        <dbReference type="ChEBI" id="CHEBI:15378"/>
        <dbReference type="ChEBI" id="CHEBI:16526"/>
        <dbReference type="ChEBI" id="CHEBI:28938"/>
        <dbReference type="ChEBI" id="CHEBI:58241"/>
        <dbReference type="ChEBI" id="CHEBI:58514"/>
        <dbReference type="EC" id="3.5.3.23"/>
    </reaction>
</comment>
<comment type="pathway">
    <text evidence="1">Amino-acid degradation; L-arginine degradation via AST pathway; L-glutamate and succinate from L-arginine: step 2/5.</text>
</comment>
<comment type="subunit">
    <text evidence="1">Homodimer.</text>
</comment>
<comment type="similarity">
    <text evidence="1">Belongs to the succinylarginine dihydrolase family.</text>
</comment>
<protein>
    <recommendedName>
        <fullName evidence="1">N-succinylarginine dihydrolase</fullName>
        <ecNumber evidence="1">3.5.3.23</ecNumber>
    </recommendedName>
</protein>
<dbReference type="EC" id="3.5.3.23" evidence="1"/>
<dbReference type="EMBL" id="CP000668">
    <property type="protein sequence ID" value="ABP39556.1"/>
    <property type="molecule type" value="Genomic_DNA"/>
</dbReference>
<dbReference type="RefSeq" id="WP_002212029.1">
    <property type="nucleotide sequence ID" value="NZ_CP009715.1"/>
</dbReference>
<dbReference type="SMR" id="A4TJU4"/>
<dbReference type="GeneID" id="49786049"/>
<dbReference type="KEGG" id="ypp:YPDSF_1158"/>
<dbReference type="PATRIC" id="fig|386656.14.peg.2667"/>
<dbReference type="UniPathway" id="UPA00185">
    <property type="reaction ID" value="UER00280"/>
</dbReference>
<dbReference type="GO" id="GO:0009015">
    <property type="term" value="F:N-succinylarginine dihydrolase activity"/>
    <property type="evidence" value="ECO:0007669"/>
    <property type="project" value="UniProtKB-UniRule"/>
</dbReference>
<dbReference type="GO" id="GO:0019544">
    <property type="term" value="P:arginine catabolic process to glutamate"/>
    <property type="evidence" value="ECO:0007669"/>
    <property type="project" value="UniProtKB-UniRule"/>
</dbReference>
<dbReference type="GO" id="GO:0019545">
    <property type="term" value="P:arginine catabolic process to succinate"/>
    <property type="evidence" value="ECO:0007669"/>
    <property type="project" value="UniProtKB-UniRule"/>
</dbReference>
<dbReference type="Gene3D" id="3.75.10.20">
    <property type="entry name" value="Succinylarginine dihydrolase"/>
    <property type="match status" value="1"/>
</dbReference>
<dbReference type="HAMAP" id="MF_01172">
    <property type="entry name" value="AstB"/>
    <property type="match status" value="1"/>
</dbReference>
<dbReference type="InterPro" id="IPR037031">
    <property type="entry name" value="AstB_sf"/>
</dbReference>
<dbReference type="InterPro" id="IPR007079">
    <property type="entry name" value="SuccinylArg_d-Hdrlase_AstB"/>
</dbReference>
<dbReference type="NCBIfam" id="TIGR03241">
    <property type="entry name" value="arg_catab_astB"/>
    <property type="match status" value="1"/>
</dbReference>
<dbReference type="NCBIfam" id="NF009789">
    <property type="entry name" value="PRK13281.1"/>
    <property type="match status" value="1"/>
</dbReference>
<dbReference type="PANTHER" id="PTHR30420">
    <property type="entry name" value="N-SUCCINYLARGININE DIHYDROLASE"/>
    <property type="match status" value="1"/>
</dbReference>
<dbReference type="PANTHER" id="PTHR30420:SF2">
    <property type="entry name" value="N-SUCCINYLARGININE DIHYDROLASE"/>
    <property type="match status" value="1"/>
</dbReference>
<dbReference type="Pfam" id="PF04996">
    <property type="entry name" value="AstB"/>
    <property type="match status" value="1"/>
</dbReference>
<dbReference type="SUPFAM" id="SSF55909">
    <property type="entry name" value="Pentein"/>
    <property type="match status" value="1"/>
</dbReference>
<gene>
    <name evidence="1" type="primary">astB</name>
    <name type="ordered locus">YPDSF_1158</name>
</gene>
<sequence>MAGYEVNFDGLVGLTHHYAGLSFGNEASTTHQNRTSNPRLAAKQGLLKMKALADLGYKQGVLPPQERPAIGVLRKLGFSGSDEQVLSDVARNAPRLLSAVSSASSMWTANAATVSPSADSADGRVHFTVANLHNKFHRAIEAETTAVLLPAVFNNHRHFVHHDALPSVTLLGDEGAANHNRLGGEYDSPAIQMFVYGRQGMESGAVPGRYPARQTREASQAVARLHQLDPKRTVFVQQNPAVIDQGVFHNDVIAVSNRNVLFHHELAFLSSTQVMDDIRCKMAGLEQQLVNIEVPEAEVSVADAVSTYLFNSQLLHKANGKMLLVIPQESQDNPSVWRYLSELVSGDGPIDELRVFDLRESMRNGGGPACLRLRVVLNDAELQAVNSRVMLTPALFVTLNNWVDQHYRDHLQFKDLADPHLLQEGRQALDELTRILNLGPVYPFQRN</sequence>
<reference key="1">
    <citation type="submission" date="2007-02" db="EMBL/GenBank/DDBJ databases">
        <title>Complete sequence of chromosome of Yersinia pestis Pestoides F.</title>
        <authorList>
            <consortium name="US DOE Joint Genome Institute"/>
            <person name="Copeland A."/>
            <person name="Lucas S."/>
            <person name="Lapidus A."/>
            <person name="Barry K."/>
            <person name="Detter J.C."/>
            <person name="Glavina del Rio T."/>
            <person name="Hammon N."/>
            <person name="Israni S."/>
            <person name="Dalin E."/>
            <person name="Tice H."/>
            <person name="Pitluck S."/>
            <person name="Di Bartolo G."/>
            <person name="Chain P."/>
            <person name="Malfatti S."/>
            <person name="Shin M."/>
            <person name="Vergez L."/>
            <person name="Schmutz J."/>
            <person name="Larimer F."/>
            <person name="Land M."/>
            <person name="Hauser L."/>
            <person name="Worsham P."/>
            <person name="Chu M."/>
            <person name="Bearden S."/>
            <person name="Garcia E."/>
            <person name="Richardson P."/>
        </authorList>
    </citation>
    <scope>NUCLEOTIDE SEQUENCE [LARGE SCALE GENOMIC DNA]</scope>
    <source>
        <strain>Pestoides F</strain>
    </source>
</reference>
<name>ASTB_YERPP</name>
<proteinExistence type="inferred from homology"/>
<accession>A4TJU4</accession>
<evidence type="ECO:0000255" key="1">
    <source>
        <dbReference type="HAMAP-Rule" id="MF_01172"/>
    </source>
</evidence>
<organism>
    <name type="scientific">Yersinia pestis (strain Pestoides F)</name>
    <dbReference type="NCBI Taxonomy" id="386656"/>
    <lineage>
        <taxon>Bacteria</taxon>
        <taxon>Pseudomonadati</taxon>
        <taxon>Pseudomonadota</taxon>
        <taxon>Gammaproteobacteria</taxon>
        <taxon>Enterobacterales</taxon>
        <taxon>Yersiniaceae</taxon>
        <taxon>Yersinia</taxon>
    </lineage>
</organism>
<keyword id="KW-0056">Arginine metabolism</keyword>
<keyword id="KW-0378">Hydrolase</keyword>
<feature type="chain" id="PRO_1000065744" description="N-succinylarginine dihydrolase">
    <location>
        <begin position="1"/>
        <end position="447"/>
    </location>
</feature>
<feature type="active site" evidence="1">
    <location>
        <position position="174"/>
    </location>
</feature>
<feature type="active site" evidence="1">
    <location>
        <position position="249"/>
    </location>
</feature>
<feature type="active site" description="Nucleophile" evidence="1">
    <location>
        <position position="370"/>
    </location>
</feature>
<feature type="binding site" evidence="1">
    <location>
        <begin position="19"/>
        <end position="28"/>
    </location>
    <ligand>
        <name>substrate</name>
    </ligand>
</feature>
<feature type="binding site" evidence="1">
    <location>
        <position position="110"/>
    </location>
    <ligand>
        <name>substrate</name>
    </ligand>
</feature>
<feature type="binding site" evidence="1">
    <location>
        <begin position="137"/>
        <end position="138"/>
    </location>
    <ligand>
        <name>substrate</name>
    </ligand>
</feature>
<feature type="binding site" evidence="1">
    <location>
        <position position="213"/>
    </location>
    <ligand>
        <name>substrate</name>
    </ligand>
</feature>
<feature type="binding site" evidence="1">
    <location>
        <position position="251"/>
    </location>
    <ligand>
        <name>substrate</name>
    </ligand>
</feature>
<feature type="binding site" evidence="1">
    <location>
        <position position="364"/>
    </location>
    <ligand>
        <name>substrate</name>
    </ligand>
</feature>